<proteinExistence type="evidence at transcript level"/>
<accession>Q0D1P7</accession>
<keyword id="KW-0325">Glycoprotein</keyword>
<keyword id="KW-0472">Membrane</keyword>
<keyword id="KW-0560">Oxidoreductase</keyword>
<keyword id="KW-1185">Reference proteome</keyword>
<keyword id="KW-0812">Transmembrane</keyword>
<keyword id="KW-1133">Transmembrane helix</keyword>
<evidence type="ECO:0000250" key="1">
    <source>
        <dbReference type="UniProtKB" id="A0A059TC02"/>
    </source>
</evidence>
<evidence type="ECO:0000255" key="2"/>
<evidence type="ECO:0000255" key="3">
    <source>
        <dbReference type="PROSITE-ProRule" id="PRU00498"/>
    </source>
</evidence>
<evidence type="ECO:0000269" key="4">
    <source>
    </source>
</evidence>
<evidence type="ECO:0000269" key="5">
    <source>
    </source>
</evidence>
<evidence type="ECO:0000303" key="6">
    <source>
    </source>
</evidence>
<evidence type="ECO:0000305" key="7"/>
<evidence type="ECO:0000305" key="8">
    <source>
    </source>
</evidence>
<name>TERH_ASPTN</name>
<sequence>MTVSSSIVPPGGLVLVTGVTGFIGSYIANGLLELGYRVRGTVRSSEKATWVTKALTKRNPSANFEAVIVPDQNAPGVWEAVLKDVDGIAHVAGDVSFGPDPTKVITPSVEALRRLLEAAKKEPSVKRFVFTSSDQAASNRSTTREILINEDTWNEEAIEAAWRPPPYEAERGWDVYSALKAQVEKEMWRFSREEKPSFVVNSVLPTYTIGAIFDEQQAGSTAKWLLDFYKDPSKDGFMRGFGSSYYVYVGDVALLHIGALTLEEVQNKRLLAFAGRFNFNSWLEVFRKHDPSKPWPEDDPTQALDTRRVNGETELYILKQFGKDGWTSFEDSALKVLESP</sequence>
<comment type="function">
    <text evidence="4">NAD-dependent epimerase/dehydratase; part of the gene cluster that mediates the biosynthesis of terrein, a fungal metabolite with ecological, antimicrobial, antiproliferative, and antioxidative activities (PubMed:24816227). The first step in the pathway is performed by the polyketide synthase terA that produces 4-hydroxy-6-methylpyranon (4-HMP), orsellinic acid (OA), and 2,3-dehydro-6-hydroxymellein (2,3-dehydro-6-HM) by condensing acetyl-CoA with two, three, or four malonyl-CoA units, respectively (PubMed:24816227). 4-HMP and OA are not pathway intermediates, but are rather shunt or side products (PubMed:24816227). 2,3-dehydro-6-HM is further converted to 6-hydroxymellein (6-HM) by the 6-hydroxymellein synthase terB (PubMed:24816227). The monooxygenases terC and terD, the multicopper oxidase terE and the Kelch-like protein terF are then involved in the transformation of 6-HM to terrein (PubMed:24816227). Even if they are co-regulated with the other terrein cluster genes, terH and terI seem to be dispensable for terrein production; whereas one or both of the 2 transporters terG and terJ are probably required for efficient secretion of metabolites (PubMed:24816227).</text>
</comment>
<comment type="subcellular location">
    <subcellularLocation>
        <location evidence="2">Membrane</location>
        <topology evidence="2">Single-pass membrane protein</topology>
    </subcellularLocation>
</comment>
<comment type="induction">
    <text evidence="5">Expression is under the control of the terrein cluster-specific transcription factor terR (PubMed:25852654).</text>
</comment>
<comment type="disruption phenotype">
    <text evidence="4">Reduces, but does not abolish, the production of terrein (PubMed:24816227).</text>
</comment>
<comment type="similarity">
    <text evidence="7">Belongs to the NAD(P)-dependent epimerase/dehydratase family. Dihydroflavonol-4-reductase subfamily.</text>
</comment>
<reference key="1">
    <citation type="submission" date="2005-09" db="EMBL/GenBank/DDBJ databases">
        <title>Annotation of the Aspergillus terreus NIH2624 genome.</title>
        <authorList>
            <person name="Birren B.W."/>
            <person name="Lander E.S."/>
            <person name="Galagan J.E."/>
            <person name="Nusbaum C."/>
            <person name="Devon K."/>
            <person name="Henn M."/>
            <person name="Ma L.-J."/>
            <person name="Jaffe D.B."/>
            <person name="Butler J."/>
            <person name="Alvarez P."/>
            <person name="Gnerre S."/>
            <person name="Grabherr M."/>
            <person name="Kleber M."/>
            <person name="Mauceli E.W."/>
            <person name="Brockman W."/>
            <person name="Rounsley S."/>
            <person name="Young S.K."/>
            <person name="LaButti K."/>
            <person name="Pushparaj V."/>
            <person name="DeCaprio D."/>
            <person name="Crawford M."/>
            <person name="Koehrsen M."/>
            <person name="Engels R."/>
            <person name="Montgomery P."/>
            <person name="Pearson M."/>
            <person name="Howarth C."/>
            <person name="Larson L."/>
            <person name="Luoma S."/>
            <person name="White J."/>
            <person name="Alvarado L."/>
            <person name="Kodira C.D."/>
            <person name="Zeng Q."/>
            <person name="Oleary S."/>
            <person name="Yandava C."/>
            <person name="Denning D.W."/>
            <person name="Nierman W.C."/>
            <person name="Milne T."/>
            <person name="Madden K."/>
        </authorList>
    </citation>
    <scope>NUCLEOTIDE SEQUENCE [LARGE SCALE GENOMIC DNA]</scope>
    <source>
        <strain>NIH 2624 / FGSC A1156</strain>
    </source>
</reference>
<reference key="2">
    <citation type="journal article" date="2014" name="Chem. Biol.">
        <title>Terrein biosynthesis in Aspergillus terreus and its impact on phytotoxicity.</title>
        <authorList>
            <person name="Zaehle C."/>
            <person name="Gressler M."/>
            <person name="Shelest E."/>
            <person name="Geib E."/>
            <person name="Hertweck C."/>
            <person name="Brock M."/>
        </authorList>
    </citation>
    <scope>FUNCTION</scope>
    <scope>DISRUPTION PHENOTYPE</scope>
</reference>
<reference key="3">
    <citation type="journal article" date="2015" name="Front. Microbiol.">
        <title>A new high-performance heterologous fungal expression system based on regulatory elements from the Aspergillus terreus terrein gene cluster.</title>
        <authorList>
            <person name="Gressler M."/>
            <person name="Hortschansky P."/>
            <person name="Geib E."/>
            <person name="Brock M."/>
        </authorList>
    </citation>
    <scope>INDUCTION</scope>
</reference>
<protein>
    <recommendedName>
        <fullName evidence="6">NAD-dependent epimerase/dehydratase terH</fullName>
        <ecNumber evidence="8">1.1.1.-</ecNumber>
    </recommendedName>
    <alternativeName>
        <fullName evidence="6">Terrein biosynthesis cluster protein terH</fullName>
    </alternativeName>
</protein>
<dbReference type="EC" id="1.1.1.-" evidence="8"/>
<dbReference type="EMBL" id="CH476594">
    <property type="protein sequence ID" value="EAU38783.1"/>
    <property type="molecule type" value="Genomic_DNA"/>
</dbReference>
<dbReference type="RefSeq" id="XP_001210223.1">
    <property type="nucleotide sequence ID" value="XM_001210223.1"/>
</dbReference>
<dbReference type="SMR" id="Q0D1P7"/>
<dbReference type="STRING" id="341663.Q0D1P7"/>
<dbReference type="GlyCosmos" id="Q0D1P7">
    <property type="glycosylation" value="1 site, No reported glycans"/>
</dbReference>
<dbReference type="EnsemblFungi" id="EAU38783">
    <property type="protein sequence ID" value="EAU38783"/>
    <property type="gene ID" value="ATEG_00137"/>
</dbReference>
<dbReference type="GeneID" id="4354894"/>
<dbReference type="VEuPathDB" id="FungiDB:ATEG_00137"/>
<dbReference type="eggNOG" id="KOG1502">
    <property type="taxonomic scope" value="Eukaryota"/>
</dbReference>
<dbReference type="HOGENOM" id="CLU_007383_9_2_1"/>
<dbReference type="OMA" id="IKHVQRF"/>
<dbReference type="OrthoDB" id="2735536at2759"/>
<dbReference type="Proteomes" id="UP000007963">
    <property type="component" value="Unassembled WGS sequence"/>
</dbReference>
<dbReference type="GO" id="GO:0016020">
    <property type="term" value="C:membrane"/>
    <property type="evidence" value="ECO:0007669"/>
    <property type="project" value="UniProtKB-SubCell"/>
</dbReference>
<dbReference type="GO" id="GO:0016616">
    <property type="term" value="F:oxidoreductase activity, acting on the CH-OH group of donors, NAD or NADP as acceptor"/>
    <property type="evidence" value="ECO:0007669"/>
    <property type="project" value="TreeGrafter"/>
</dbReference>
<dbReference type="FunFam" id="3.40.50.720:FF:000426">
    <property type="entry name" value="Aldehyde reductase 2"/>
    <property type="match status" value="1"/>
</dbReference>
<dbReference type="Gene3D" id="3.40.50.720">
    <property type="entry name" value="NAD(P)-binding Rossmann-like Domain"/>
    <property type="match status" value="1"/>
</dbReference>
<dbReference type="InterPro" id="IPR001509">
    <property type="entry name" value="Epimerase_deHydtase"/>
</dbReference>
<dbReference type="InterPro" id="IPR036291">
    <property type="entry name" value="NAD(P)-bd_dom_sf"/>
</dbReference>
<dbReference type="InterPro" id="IPR050425">
    <property type="entry name" value="NAD(P)_dehydrat-like"/>
</dbReference>
<dbReference type="PANTHER" id="PTHR10366:SF562">
    <property type="entry name" value="ALDEHYDE REDUCTASE II (AFU_ORTHOLOGUE AFUA_1G11360)"/>
    <property type="match status" value="1"/>
</dbReference>
<dbReference type="PANTHER" id="PTHR10366">
    <property type="entry name" value="NAD DEPENDENT EPIMERASE/DEHYDRATASE"/>
    <property type="match status" value="1"/>
</dbReference>
<dbReference type="Pfam" id="PF01370">
    <property type="entry name" value="Epimerase"/>
    <property type="match status" value="1"/>
</dbReference>
<dbReference type="SUPFAM" id="SSF51735">
    <property type="entry name" value="NAD(P)-binding Rossmann-fold domains"/>
    <property type="match status" value="1"/>
</dbReference>
<organism>
    <name type="scientific">Aspergillus terreus (strain NIH 2624 / FGSC A1156)</name>
    <dbReference type="NCBI Taxonomy" id="341663"/>
    <lineage>
        <taxon>Eukaryota</taxon>
        <taxon>Fungi</taxon>
        <taxon>Dikarya</taxon>
        <taxon>Ascomycota</taxon>
        <taxon>Pezizomycotina</taxon>
        <taxon>Eurotiomycetes</taxon>
        <taxon>Eurotiomycetidae</taxon>
        <taxon>Eurotiales</taxon>
        <taxon>Aspergillaceae</taxon>
        <taxon>Aspergillus</taxon>
        <taxon>Aspergillus subgen. Circumdati</taxon>
    </lineage>
</organism>
<gene>
    <name evidence="6" type="primary">terH</name>
    <name type="ORF">ATEG_00137</name>
</gene>
<feature type="chain" id="PRO_0000437630" description="NAD-dependent epimerase/dehydratase terH">
    <location>
        <begin position="1"/>
        <end position="340"/>
    </location>
</feature>
<feature type="transmembrane region" description="Helical" evidence="2">
    <location>
        <begin position="7"/>
        <end position="27"/>
    </location>
</feature>
<feature type="binding site" evidence="1">
    <location>
        <position position="176"/>
    </location>
    <ligand>
        <name>NADP(+)</name>
        <dbReference type="ChEBI" id="CHEBI:58349"/>
    </ligand>
</feature>
<feature type="glycosylation site" description="N-linked (GlcNAc...) asparagine" evidence="3">
    <location>
        <position position="139"/>
    </location>
</feature>